<reference key="1">
    <citation type="journal article" date="2010" name="BMC Genomics">
        <title>Comparative venom gland transcriptome analysis of the scorpion Lychas mucronatus reveals intraspecific toxic gene diversity and new venomous components.</title>
        <authorList>
            <person name="Zhao R."/>
            <person name="Ma Y."/>
            <person name="He Y."/>
            <person name="Di Z."/>
            <person name="Wu Y.-L."/>
            <person name="Cao Z.-J."/>
            <person name="Li W.-X."/>
        </authorList>
    </citation>
    <scope>NUCLEOTIDE SEQUENCE [MRNA]</scope>
    <source>
        <strain>Yunnan</strain>
        <tissue>Venom gland</tissue>
    </source>
</reference>
<feature type="signal peptide" evidence="2">
    <location>
        <begin position="1"/>
        <end position="29"/>
    </location>
</feature>
<feature type="chain" id="PRO_0000403911" description="Venom protein 27.7">
    <location>
        <begin position="30"/>
        <end position="59"/>
    </location>
</feature>
<comment type="subcellular location">
    <subcellularLocation>
        <location evidence="1">Secreted</location>
    </subcellularLocation>
</comment>
<comment type="tissue specificity">
    <text evidence="3">Expressed by the venom gland.</text>
</comment>
<comment type="similarity">
    <text evidence="3">Belongs to the non-disulfide-bridged peptide (NDBP) superfamily.</text>
</comment>
<evidence type="ECO:0000250" key="1"/>
<evidence type="ECO:0000255" key="2"/>
<evidence type="ECO:0000305" key="3"/>
<proteinExistence type="inferred from homology"/>
<name>NDBT_LYCMC</name>
<accession>P0CJ19</accession>
<organism>
    <name type="scientific">Lychas mucronatus</name>
    <name type="common">Chinese swimming scorpion</name>
    <dbReference type="NCBI Taxonomy" id="172552"/>
    <lineage>
        <taxon>Eukaryota</taxon>
        <taxon>Metazoa</taxon>
        <taxon>Ecdysozoa</taxon>
        <taxon>Arthropoda</taxon>
        <taxon>Chelicerata</taxon>
        <taxon>Arachnida</taxon>
        <taxon>Scorpiones</taxon>
        <taxon>Buthida</taxon>
        <taxon>Buthoidea</taxon>
        <taxon>Buthidae</taxon>
        <taxon>Lychas</taxon>
    </lineage>
</organism>
<protein>
    <recommendedName>
        <fullName>Venom protein 27.7</fullName>
    </recommendedName>
</protein>
<dbReference type="EMBL" id="GT028808">
    <property type="status" value="NOT_ANNOTATED_CDS"/>
    <property type="molecule type" value="mRNA"/>
</dbReference>
<dbReference type="GO" id="GO:0005576">
    <property type="term" value="C:extracellular region"/>
    <property type="evidence" value="ECO:0007669"/>
    <property type="project" value="UniProtKB-SubCell"/>
</dbReference>
<keyword id="KW-0964">Secreted</keyword>
<keyword id="KW-0732">Signal</keyword>
<sequence>MTFITLTIGLSLRTIFLIFIFLPPPHLLARTTSLTRRQTRKTTIKVFVFILPFYQTPNW</sequence>